<name>IDI_BURM1</name>
<accession>A9AST0</accession>
<gene>
    <name evidence="1" type="primary">idi</name>
    <name type="ordered locus">Bmul_5942</name>
    <name type="ordered locus">BMULJ_05584</name>
</gene>
<reference key="1">
    <citation type="submission" date="2007-10" db="EMBL/GenBank/DDBJ databases">
        <title>Complete sequence of chromosome 3 of Burkholderia multivorans ATCC 17616.</title>
        <authorList>
            <person name="Copeland A."/>
            <person name="Lucas S."/>
            <person name="Lapidus A."/>
            <person name="Barry K."/>
            <person name="Glavina del Rio T."/>
            <person name="Dalin E."/>
            <person name="Tice H."/>
            <person name="Pitluck S."/>
            <person name="Chain P."/>
            <person name="Malfatti S."/>
            <person name="Shin M."/>
            <person name="Vergez L."/>
            <person name="Schmutz J."/>
            <person name="Larimer F."/>
            <person name="Land M."/>
            <person name="Hauser L."/>
            <person name="Kyrpides N."/>
            <person name="Kim E."/>
            <person name="Tiedje J."/>
            <person name="Richardson P."/>
        </authorList>
    </citation>
    <scope>NUCLEOTIDE SEQUENCE [LARGE SCALE GENOMIC DNA]</scope>
    <source>
        <strain>ATCC 17616 / 249</strain>
    </source>
</reference>
<reference key="2">
    <citation type="submission" date="2007-04" db="EMBL/GenBank/DDBJ databases">
        <title>Complete genome sequence of Burkholderia multivorans ATCC 17616.</title>
        <authorList>
            <person name="Ohtsubo Y."/>
            <person name="Yamashita A."/>
            <person name="Kurokawa K."/>
            <person name="Takami H."/>
            <person name="Yuhara S."/>
            <person name="Nishiyama E."/>
            <person name="Endo R."/>
            <person name="Miyazaki R."/>
            <person name="Ono A."/>
            <person name="Yano K."/>
            <person name="Ito M."/>
            <person name="Sota M."/>
            <person name="Yuji N."/>
            <person name="Hattori M."/>
            <person name="Tsuda M."/>
        </authorList>
    </citation>
    <scope>NUCLEOTIDE SEQUENCE [LARGE SCALE GENOMIC DNA]</scope>
    <source>
        <strain>ATCC 17616 / 249</strain>
    </source>
</reference>
<protein>
    <recommendedName>
        <fullName evidence="1">Isopentenyl-diphosphate Delta-isomerase</fullName>
        <shortName evidence="1">IPP isomerase</shortName>
        <ecNumber evidence="1">5.3.3.2</ecNumber>
    </recommendedName>
    <alternativeName>
        <fullName evidence="1">IPP:DMAPP isomerase</fullName>
    </alternativeName>
    <alternativeName>
        <fullName evidence="1">Isopentenyl pyrophosphate isomerase</fullName>
    </alternativeName>
</protein>
<proteinExistence type="inferred from homology"/>
<keyword id="KW-0963">Cytoplasm</keyword>
<keyword id="KW-0413">Isomerase</keyword>
<keyword id="KW-0414">Isoprene biosynthesis</keyword>
<keyword id="KW-0460">Magnesium</keyword>
<keyword id="KW-0464">Manganese</keyword>
<keyword id="KW-0479">Metal-binding</keyword>
<keyword id="KW-1185">Reference proteome</keyword>
<comment type="function">
    <text evidence="1">Catalyzes the 1,3-allylic rearrangement of the homoallylic substrate isopentenyl (IPP) to its highly electrophilic allylic isomer, dimethylallyl diphosphate (DMAPP).</text>
</comment>
<comment type="catalytic activity">
    <reaction evidence="1">
        <text>isopentenyl diphosphate = dimethylallyl diphosphate</text>
        <dbReference type="Rhea" id="RHEA:23284"/>
        <dbReference type="ChEBI" id="CHEBI:57623"/>
        <dbReference type="ChEBI" id="CHEBI:128769"/>
        <dbReference type="EC" id="5.3.3.2"/>
    </reaction>
</comment>
<comment type="cofactor">
    <cofactor evidence="1">
        <name>Mg(2+)</name>
        <dbReference type="ChEBI" id="CHEBI:18420"/>
    </cofactor>
    <text evidence="1">Binds 1 Mg(2+) ion per subunit. The magnesium ion binds only when substrate is bound.</text>
</comment>
<comment type="cofactor">
    <cofactor evidence="1">
        <name>Mn(2+)</name>
        <dbReference type="ChEBI" id="CHEBI:29035"/>
    </cofactor>
    <text evidence="1">Binds 1 Mn(2+) ion per subunit.</text>
</comment>
<comment type="pathway">
    <text evidence="1">Isoprenoid biosynthesis; dimethylallyl diphosphate biosynthesis; dimethylallyl diphosphate from isopentenyl diphosphate: step 1/1.</text>
</comment>
<comment type="subcellular location">
    <subcellularLocation>
        <location evidence="1">Cytoplasm</location>
    </subcellularLocation>
</comment>
<comment type="similarity">
    <text evidence="1">Belongs to the IPP isomerase type 1 family.</text>
</comment>
<organism>
    <name type="scientific">Burkholderia multivorans (strain ATCC 17616 / 249)</name>
    <dbReference type="NCBI Taxonomy" id="395019"/>
    <lineage>
        <taxon>Bacteria</taxon>
        <taxon>Pseudomonadati</taxon>
        <taxon>Pseudomonadota</taxon>
        <taxon>Betaproteobacteria</taxon>
        <taxon>Burkholderiales</taxon>
        <taxon>Burkholderiaceae</taxon>
        <taxon>Burkholderia</taxon>
        <taxon>Burkholderia cepacia complex</taxon>
    </lineage>
</organism>
<dbReference type="EC" id="5.3.3.2" evidence="1"/>
<dbReference type="EMBL" id="CP000870">
    <property type="protein sequence ID" value="ABX19602.1"/>
    <property type="molecule type" value="Genomic_DNA"/>
</dbReference>
<dbReference type="EMBL" id="AP009387">
    <property type="protein sequence ID" value="BAG47412.1"/>
    <property type="molecule type" value="Genomic_DNA"/>
</dbReference>
<dbReference type="RefSeq" id="WP_012218287.1">
    <property type="nucleotide sequence ID" value="NC_010087.1"/>
</dbReference>
<dbReference type="SMR" id="A9AST0"/>
<dbReference type="STRING" id="395019.BMULJ_05584"/>
<dbReference type="KEGG" id="bmj:BMULJ_05584"/>
<dbReference type="KEGG" id="bmu:Bmul_5942"/>
<dbReference type="eggNOG" id="COG1443">
    <property type="taxonomic scope" value="Bacteria"/>
</dbReference>
<dbReference type="HOGENOM" id="CLU_060552_2_1_4"/>
<dbReference type="UniPathway" id="UPA00059">
    <property type="reaction ID" value="UER00104"/>
</dbReference>
<dbReference type="Proteomes" id="UP000008815">
    <property type="component" value="Chromosome 3"/>
</dbReference>
<dbReference type="GO" id="GO:0005737">
    <property type="term" value="C:cytoplasm"/>
    <property type="evidence" value="ECO:0007669"/>
    <property type="project" value="UniProtKB-SubCell"/>
</dbReference>
<dbReference type="GO" id="GO:0004452">
    <property type="term" value="F:isopentenyl-diphosphate delta-isomerase activity"/>
    <property type="evidence" value="ECO:0007669"/>
    <property type="project" value="UniProtKB-UniRule"/>
</dbReference>
<dbReference type="GO" id="GO:0046872">
    <property type="term" value="F:metal ion binding"/>
    <property type="evidence" value="ECO:0007669"/>
    <property type="project" value="UniProtKB-KW"/>
</dbReference>
<dbReference type="GO" id="GO:0050992">
    <property type="term" value="P:dimethylallyl diphosphate biosynthetic process"/>
    <property type="evidence" value="ECO:0007669"/>
    <property type="project" value="UniProtKB-UniRule"/>
</dbReference>
<dbReference type="GO" id="GO:0009240">
    <property type="term" value="P:isopentenyl diphosphate biosynthetic process"/>
    <property type="evidence" value="ECO:0007669"/>
    <property type="project" value="TreeGrafter"/>
</dbReference>
<dbReference type="CDD" id="cd02885">
    <property type="entry name" value="NUDIX_IPP_Isomerase"/>
    <property type="match status" value="1"/>
</dbReference>
<dbReference type="Gene3D" id="3.90.79.10">
    <property type="entry name" value="Nucleoside Triphosphate Pyrophosphohydrolase"/>
    <property type="match status" value="1"/>
</dbReference>
<dbReference type="HAMAP" id="MF_00202">
    <property type="entry name" value="Idi"/>
    <property type="match status" value="1"/>
</dbReference>
<dbReference type="InterPro" id="IPR056375">
    <property type="entry name" value="Idi_bact"/>
</dbReference>
<dbReference type="InterPro" id="IPR011876">
    <property type="entry name" value="IsopentenylPP_isomerase_typ1"/>
</dbReference>
<dbReference type="InterPro" id="IPR015797">
    <property type="entry name" value="NUDIX_hydrolase-like_dom_sf"/>
</dbReference>
<dbReference type="InterPro" id="IPR000086">
    <property type="entry name" value="NUDIX_hydrolase_dom"/>
</dbReference>
<dbReference type="NCBIfam" id="TIGR02150">
    <property type="entry name" value="IPP_isom_1"/>
    <property type="match status" value="1"/>
</dbReference>
<dbReference type="NCBIfam" id="NF002995">
    <property type="entry name" value="PRK03759.1"/>
    <property type="match status" value="1"/>
</dbReference>
<dbReference type="PANTHER" id="PTHR10885">
    <property type="entry name" value="ISOPENTENYL-DIPHOSPHATE DELTA-ISOMERASE"/>
    <property type="match status" value="1"/>
</dbReference>
<dbReference type="PANTHER" id="PTHR10885:SF0">
    <property type="entry name" value="ISOPENTENYL-DIPHOSPHATE DELTA-ISOMERASE"/>
    <property type="match status" value="1"/>
</dbReference>
<dbReference type="Pfam" id="PF00293">
    <property type="entry name" value="NUDIX"/>
    <property type="match status" value="1"/>
</dbReference>
<dbReference type="PIRSF" id="PIRSF018427">
    <property type="entry name" value="Isopntndiph_ism"/>
    <property type="match status" value="1"/>
</dbReference>
<dbReference type="SUPFAM" id="SSF55811">
    <property type="entry name" value="Nudix"/>
    <property type="match status" value="1"/>
</dbReference>
<dbReference type="PROSITE" id="PS51462">
    <property type="entry name" value="NUDIX"/>
    <property type="match status" value="1"/>
</dbReference>
<sequence length="176" mass="20421">MEERLILVDTDDRPIGICEKMRAHHEGLLHRAFSIFVFDSAGRLLLQQRALNKYHSGGLWSNTCCGHPRPREALPDAVRRRLGEEMGFACELRPVDALVYRARFENDLIEHEFVHIHVGRFDGTVAPDFAEVAAWRWIDVPTLLEWMADEPSAFTVWFHCMIERAGLPVLHRWAHR</sequence>
<feature type="chain" id="PRO_1000099435" description="Isopentenyl-diphosphate Delta-isomerase">
    <location>
        <begin position="1"/>
        <end position="176"/>
    </location>
</feature>
<feature type="domain" description="Nudix hydrolase">
    <location>
        <begin position="28"/>
        <end position="160"/>
    </location>
</feature>
<feature type="active site" evidence="1">
    <location>
        <position position="65"/>
    </location>
</feature>
<feature type="active site" evidence="1">
    <location>
        <position position="112"/>
    </location>
</feature>
<feature type="binding site" evidence="1">
    <location>
        <position position="24"/>
    </location>
    <ligand>
        <name>Mn(2+)</name>
        <dbReference type="ChEBI" id="CHEBI:29035"/>
    </ligand>
</feature>
<feature type="binding site" evidence="1">
    <location>
        <position position="30"/>
    </location>
    <ligand>
        <name>Mn(2+)</name>
        <dbReference type="ChEBI" id="CHEBI:29035"/>
    </ligand>
</feature>
<feature type="binding site" evidence="1">
    <location>
        <position position="67"/>
    </location>
    <ligand>
        <name>Mn(2+)</name>
        <dbReference type="ChEBI" id="CHEBI:29035"/>
    </ligand>
</feature>
<feature type="binding site" evidence="1">
    <location>
        <position position="85"/>
    </location>
    <ligand>
        <name>Mg(2+)</name>
        <dbReference type="ChEBI" id="CHEBI:18420"/>
    </ligand>
</feature>
<feature type="binding site" evidence="1">
    <location>
        <position position="110"/>
    </location>
    <ligand>
        <name>Mn(2+)</name>
        <dbReference type="ChEBI" id="CHEBI:29035"/>
    </ligand>
</feature>
<feature type="binding site" evidence="1">
    <location>
        <position position="112"/>
    </location>
    <ligand>
        <name>Mn(2+)</name>
        <dbReference type="ChEBI" id="CHEBI:29035"/>
    </ligand>
</feature>
<evidence type="ECO:0000255" key="1">
    <source>
        <dbReference type="HAMAP-Rule" id="MF_00202"/>
    </source>
</evidence>